<evidence type="ECO:0000250" key="1">
    <source>
        <dbReference type="UniProtKB" id="P97536"/>
    </source>
</evidence>
<evidence type="ECO:0000256" key="2">
    <source>
        <dbReference type="SAM" id="MobiDB-lite"/>
    </source>
</evidence>
<evidence type="ECO:0000269" key="3">
    <source>
    </source>
</evidence>
<evidence type="ECO:0000269" key="4">
    <source>
    </source>
</evidence>
<evidence type="ECO:0000269" key="5">
    <source>
    </source>
</evidence>
<evidence type="ECO:0000269" key="6">
    <source>
    </source>
</evidence>
<evidence type="ECO:0000269" key="7">
    <source>
    </source>
</evidence>
<evidence type="ECO:0000269" key="8">
    <source>
    </source>
</evidence>
<evidence type="ECO:0000269" key="9">
    <source>
    </source>
</evidence>
<evidence type="ECO:0000269" key="10">
    <source>
    </source>
</evidence>
<evidence type="ECO:0000269" key="11">
    <source>
    </source>
</evidence>
<evidence type="ECO:0000269" key="12">
    <source>
    </source>
</evidence>
<evidence type="ECO:0000269" key="13">
    <source>
    </source>
</evidence>
<evidence type="ECO:0000269" key="14">
    <source>
    </source>
</evidence>
<evidence type="ECO:0000269" key="15">
    <source>
    </source>
</evidence>
<evidence type="ECO:0000269" key="16">
    <source>
    </source>
</evidence>
<evidence type="ECO:0000269" key="17">
    <source>
    </source>
</evidence>
<evidence type="ECO:0000269" key="18">
    <source ref="8"/>
</evidence>
<evidence type="ECO:0000269" key="19">
    <source ref="9"/>
</evidence>
<evidence type="ECO:0000303" key="20">
    <source>
    </source>
</evidence>
<evidence type="ECO:0000303" key="21">
    <source>
    </source>
</evidence>
<evidence type="ECO:0000305" key="22"/>
<evidence type="ECO:0000305" key="23">
    <source>
    </source>
</evidence>
<evidence type="ECO:0007744" key="24">
    <source>
    </source>
</evidence>
<evidence type="ECO:0007744" key="25">
    <source>
    </source>
</evidence>
<evidence type="ECO:0007744" key="26">
    <source>
    </source>
</evidence>
<evidence type="ECO:0007744" key="27">
    <source>
    </source>
</evidence>
<evidence type="ECO:0007744" key="28">
    <source>
    </source>
</evidence>
<evidence type="ECO:0007829" key="29">
    <source>
        <dbReference type="PDB" id="1U6G"/>
    </source>
</evidence>
<evidence type="ECO:0007829" key="30">
    <source>
        <dbReference type="PDB" id="7Z8R"/>
    </source>
</evidence>
<evidence type="ECO:0007829" key="31">
    <source>
        <dbReference type="PDB" id="7Z8V"/>
    </source>
</evidence>
<evidence type="ECO:0007829" key="32">
    <source>
        <dbReference type="PDB" id="7ZBZ"/>
    </source>
</evidence>
<evidence type="ECO:0007829" key="33">
    <source>
        <dbReference type="PDB" id="8CDK"/>
    </source>
</evidence>
<evidence type="ECO:0007829" key="34">
    <source>
        <dbReference type="PDB" id="8OR0"/>
    </source>
</evidence>
<evidence type="ECO:0007829" key="35">
    <source>
        <dbReference type="PDB" id="8OR3"/>
    </source>
</evidence>
<dbReference type="EMBL" id="AB020636">
    <property type="protein sequence ID" value="BAA74852.2"/>
    <property type="status" value="ALT_INIT"/>
    <property type="molecule type" value="mRNA"/>
</dbReference>
<dbReference type="EMBL" id="AF157326">
    <property type="protein sequence ID" value="AAF67492.1"/>
    <property type="molecule type" value="mRNA"/>
</dbReference>
<dbReference type="EMBL" id="AL133560">
    <property type="protein sequence ID" value="CAB63714.1"/>
    <property type="molecule type" value="mRNA"/>
</dbReference>
<dbReference type="EMBL" id="AL136810">
    <property type="protein sequence ID" value="CAB66744.1"/>
    <property type="molecule type" value="mRNA"/>
</dbReference>
<dbReference type="EMBL" id="AL833880">
    <property type="protein sequence ID" value="CAD38737.1"/>
    <property type="molecule type" value="mRNA"/>
</dbReference>
<dbReference type="EMBL" id="CH471054">
    <property type="protein sequence ID" value="EAW97172.1"/>
    <property type="molecule type" value="Genomic_DNA"/>
</dbReference>
<dbReference type="EMBL" id="BC004232">
    <property type="protein sequence ID" value="AAH04232.1"/>
    <property type="molecule type" value="mRNA"/>
</dbReference>
<dbReference type="EMBL" id="BC026220">
    <property type="protein sequence ID" value="AAH26220.1"/>
    <property type="molecule type" value="mRNA"/>
</dbReference>
<dbReference type="EMBL" id="BC050341">
    <property type="protein sequence ID" value="AAH50341.1"/>
    <property type="molecule type" value="mRNA"/>
</dbReference>
<dbReference type="EMBL" id="AK027404">
    <property type="protein sequence ID" value="BAB55090.1"/>
    <property type="status" value="ALT_INIT"/>
    <property type="molecule type" value="mRNA"/>
</dbReference>
<dbReference type="EMBL" id="AK027783">
    <property type="protein sequence ID" value="BAB55365.1"/>
    <property type="molecule type" value="mRNA"/>
</dbReference>
<dbReference type="EMBL" id="AK314358">
    <property type="protein sequence ID" value="BAG36990.1"/>
    <property type="molecule type" value="mRNA"/>
</dbReference>
<dbReference type="CCDS" id="CCDS8977.1">
    <molecule id="Q86VP6-1"/>
</dbReference>
<dbReference type="PIR" id="T43441">
    <property type="entry name" value="T43441"/>
</dbReference>
<dbReference type="RefSeq" id="NP_060918.2">
    <molecule id="Q86VP6-1"/>
    <property type="nucleotide sequence ID" value="NM_018448.4"/>
</dbReference>
<dbReference type="PDB" id="1U6G">
    <property type="method" value="X-ray"/>
    <property type="resolution" value="3.10 A"/>
    <property type="chains" value="C=1-1230"/>
</dbReference>
<dbReference type="PDB" id="4A0C">
    <property type="method" value="X-ray"/>
    <property type="resolution" value="3.80 A"/>
    <property type="chains" value="A/B=1-1230"/>
</dbReference>
<dbReference type="PDB" id="7Z8R">
    <property type="method" value="EM"/>
    <property type="resolution" value="2.70 A"/>
    <property type="chains" value="D=1-1230"/>
</dbReference>
<dbReference type="PDB" id="7Z8T">
    <property type="method" value="EM"/>
    <property type="resolution" value="3.00 A"/>
    <property type="chains" value="D=1-1230"/>
</dbReference>
<dbReference type="PDB" id="7Z8V">
    <property type="method" value="EM"/>
    <property type="resolution" value="2.70 A"/>
    <property type="chains" value="D=1-1230"/>
</dbReference>
<dbReference type="PDB" id="7ZBW">
    <property type="method" value="EM"/>
    <property type="resolution" value="3.50 A"/>
    <property type="chains" value="D=1-1230"/>
</dbReference>
<dbReference type="PDB" id="7ZBZ">
    <property type="method" value="EM"/>
    <property type="resolution" value="3.10 A"/>
    <property type="chains" value="D=1-1230"/>
</dbReference>
<dbReference type="PDB" id="8CDJ">
    <property type="method" value="EM"/>
    <property type="resolution" value="3.40 A"/>
    <property type="chains" value="D=1-1230"/>
</dbReference>
<dbReference type="PDB" id="8CDK">
    <property type="method" value="EM"/>
    <property type="resolution" value="3.32 A"/>
    <property type="chains" value="D=1-1230"/>
</dbReference>
<dbReference type="PDB" id="8H3Q">
    <property type="method" value="EM"/>
    <property type="resolution" value="3.76 A"/>
    <property type="chains" value="A=1-1230"/>
</dbReference>
<dbReference type="PDB" id="8OR0">
    <property type="method" value="EM"/>
    <property type="resolution" value="3.10 A"/>
    <property type="chains" value="C=1-1230"/>
</dbReference>
<dbReference type="PDB" id="8OR2">
    <property type="method" value="EM"/>
    <property type="resolution" value="3.20 A"/>
    <property type="chains" value="C=1-1230"/>
</dbReference>
<dbReference type="PDB" id="8OR3">
    <property type="method" value="EM"/>
    <property type="resolution" value="2.90 A"/>
    <property type="chains" value="C=1-1230"/>
</dbReference>
<dbReference type="PDB" id="8OR4">
    <property type="method" value="EM"/>
    <property type="resolution" value="3.80 A"/>
    <property type="chains" value="C=1-1230"/>
</dbReference>
<dbReference type="PDBsum" id="1U6G"/>
<dbReference type="PDBsum" id="4A0C"/>
<dbReference type="PDBsum" id="7Z8R"/>
<dbReference type="PDBsum" id="7Z8T"/>
<dbReference type="PDBsum" id="7Z8V"/>
<dbReference type="PDBsum" id="7ZBW"/>
<dbReference type="PDBsum" id="7ZBZ"/>
<dbReference type="PDBsum" id="8CDJ"/>
<dbReference type="PDBsum" id="8CDK"/>
<dbReference type="PDBsum" id="8H3Q"/>
<dbReference type="PDBsum" id="8OR0"/>
<dbReference type="PDBsum" id="8OR2"/>
<dbReference type="PDBsum" id="8OR3"/>
<dbReference type="PDBsum" id="8OR4"/>
<dbReference type="EMDB" id="EMD-14561"/>
<dbReference type="EMDB" id="EMD-14563"/>
<dbReference type="EMDB" id="EMD-14564"/>
<dbReference type="EMDB" id="EMD-14594"/>
<dbReference type="EMDB" id="EMD-14597"/>
<dbReference type="EMDB" id="EMD-16575"/>
<dbReference type="EMDB" id="EMD-16576"/>
<dbReference type="EMDB" id="EMD-17114"/>
<dbReference type="EMDB" id="EMD-17115"/>
<dbReference type="EMDB" id="EMD-17116"/>
<dbReference type="EMDB" id="EMD-17117"/>
<dbReference type="EMDB" id="EMD-34473"/>
<dbReference type="SMR" id="Q86VP6"/>
<dbReference type="BioGRID" id="120937">
    <property type="interactions" value="1014"/>
</dbReference>
<dbReference type="CORUM" id="Q86VP6"/>
<dbReference type="DIP" id="DIP-31608N"/>
<dbReference type="FunCoup" id="Q86VP6">
    <property type="interactions" value="3955"/>
</dbReference>
<dbReference type="IntAct" id="Q86VP6">
    <property type="interactions" value="632"/>
</dbReference>
<dbReference type="MINT" id="Q86VP6"/>
<dbReference type="STRING" id="9606.ENSP00000442318"/>
<dbReference type="GlyGen" id="Q86VP6">
    <property type="glycosylation" value="1 site, 1 O-linked glycan (1 site)"/>
</dbReference>
<dbReference type="iPTMnet" id="Q86VP6"/>
<dbReference type="MetOSite" id="Q86VP6"/>
<dbReference type="PhosphoSitePlus" id="Q86VP6"/>
<dbReference type="SwissPalm" id="Q86VP6"/>
<dbReference type="BioMuta" id="CAND1"/>
<dbReference type="DMDM" id="67460541"/>
<dbReference type="jPOST" id="Q86VP6"/>
<dbReference type="MassIVE" id="Q86VP6"/>
<dbReference type="PaxDb" id="9606-ENSP00000442318"/>
<dbReference type="PeptideAtlas" id="Q86VP6"/>
<dbReference type="ProteomicsDB" id="70051">
    <molecule id="Q86VP6-1"/>
</dbReference>
<dbReference type="ProteomicsDB" id="70052">
    <molecule id="Q86VP6-2"/>
</dbReference>
<dbReference type="ProteomicsDB" id="70053">
    <molecule id="Q86VP6-3"/>
</dbReference>
<dbReference type="Pumba" id="Q86VP6"/>
<dbReference type="Antibodypedia" id="16667">
    <property type="antibodies" value="215 antibodies from 27 providers"/>
</dbReference>
<dbReference type="DNASU" id="55832"/>
<dbReference type="Ensembl" id="ENST00000545606.6">
    <molecule id="Q86VP6-1"/>
    <property type="protein sequence ID" value="ENSP00000442318.1"/>
    <property type="gene ID" value="ENSG00000111530.13"/>
</dbReference>
<dbReference type="GeneID" id="55832"/>
<dbReference type="KEGG" id="hsa:55832"/>
<dbReference type="MANE-Select" id="ENST00000545606.6">
    <property type="protein sequence ID" value="ENSP00000442318.1"/>
    <property type="RefSeq nucleotide sequence ID" value="NM_018448.5"/>
    <property type="RefSeq protein sequence ID" value="NP_060918.2"/>
</dbReference>
<dbReference type="UCSC" id="uc001stn.3">
    <molecule id="Q86VP6-1"/>
    <property type="organism name" value="human"/>
</dbReference>
<dbReference type="AGR" id="HGNC:30688"/>
<dbReference type="CTD" id="55832"/>
<dbReference type="DisGeNET" id="55832"/>
<dbReference type="GeneCards" id="CAND1"/>
<dbReference type="HGNC" id="HGNC:30688">
    <property type="gene designation" value="CAND1"/>
</dbReference>
<dbReference type="HPA" id="ENSG00000111530">
    <property type="expression patterns" value="Low tissue specificity"/>
</dbReference>
<dbReference type="MalaCards" id="CAND1"/>
<dbReference type="MIM" id="607727">
    <property type="type" value="gene"/>
</dbReference>
<dbReference type="neXtProt" id="NX_Q86VP6"/>
<dbReference type="OpenTargets" id="ENSG00000111530"/>
<dbReference type="PharmGKB" id="PA142672207"/>
<dbReference type="VEuPathDB" id="HostDB:ENSG00000111530"/>
<dbReference type="eggNOG" id="KOG1824">
    <property type="taxonomic scope" value="Eukaryota"/>
</dbReference>
<dbReference type="GeneTree" id="ENSGT00390000017740"/>
<dbReference type="HOGENOM" id="CLU_007157_0_0_1"/>
<dbReference type="InParanoid" id="Q86VP6"/>
<dbReference type="OMA" id="AYIPHFQ"/>
<dbReference type="OrthoDB" id="6260732at2759"/>
<dbReference type="PAN-GO" id="Q86VP6">
    <property type="GO annotations" value="3 GO annotations based on evolutionary models"/>
</dbReference>
<dbReference type="PhylomeDB" id="Q86VP6"/>
<dbReference type="TreeFam" id="TF300355"/>
<dbReference type="PathwayCommons" id="Q86VP6"/>
<dbReference type="Reactome" id="R-HSA-6798695">
    <property type="pathway name" value="Neutrophil degranulation"/>
</dbReference>
<dbReference type="Reactome" id="R-HSA-8951664">
    <property type="pathway name" value="Neddylation"/>
</dbReference>
<dbReference type="Reactome" id="R-HSA-917937">
    <property type="pathway name" value="Iron uptake and transport"/>
</dbReference>
<dbReference type="SignaLink" id="Q86VP6"/>
<dbReference type="BioGRID-ORCS" id="55832">
    <property type="hits" value="276 hits in 1180 CRISPR screens"/>
</dbReference>
<dbReference type="CD-CODE" id="91857CE7">
    <property type="entry name" value="Nucleolus"/>
</dbReference>
<dbReference type="CD-CODE" id="FB4E32DD">
    <property type="entry name" value="Presynaptic clusters and postsynaptic densities"/>
</dbReference>
<dbReference type="ChiTaRS" id="CAND1">
    <property type="organism name" value="human"/>
</dbReference>
<dbReference type="EvolutionaryTrace" id="Q86VP6"/>
<dbReference type="GeneWiki" id="CAND1"/>
<dbReference type="GenomeRNAi" id="55832"/>
<dbReference type="Pharos" id="Q86VP6">
    <property type="development level" value="Tbio"/>
</dbReference>
<dbReference type="PRO" id="PR:Q86VP6"/>
<dbReference type="Proteomes" id="UP000005640">
    <property type="component" value="Chromosome 12"/>
</dbReference>
<dbReference type="RNAct" id="Q86VP6">
    <property type="molecule type" value="protein"/>
</dbReference>
<dbReference type="Bgee" id="ENSG00000111530">
    <property type="expression patterns" value="Expressed in adrenal tissue and 210 other cell types or tissues"/>
</dbReference>
<dbReference type="ExpressionAtlas" id="Q86VP6">
    <property type="expression patterns" value="baseline and differential"/>
</dbReference>
<dbReference type="GO" id="GO:0031461">
    <property type="term" value="C:cullin-RING ubiquitin ligase complex"/>
    <property type="evidence" value="ECO:0000314"/>
    <property type="project" value="UniProtKB"/>
</dbReference>
<dbReference type="GO" id="GO:0005737">
    <property type="term" value="C:cytoplasm"/>
    <property type="evidence" value="ECO:0000314"/>
    <property type="project" value="UniProtKB"/>
</dbReference>
<dbReference type="GO" id="GO:0005829">
    <property type="term" value="C:cytosol"/>
    <property type="evidence" value="ECO:0000314"/>
    <property type="project" value="HPA"/>
</dbReference>
<dbReference type="GO" id="GO:0070062">
    <property type="term" value="C:extracellular exosome"/>
    <property type="evidence" value="ECO:0007005"/>
    <property type="project" value="UniProtKB"/>
</dbReference>
<dbReference type="GO" id="GO:0005576">
    <property type="term" value="C:extracellular region"/>
    <property type="evidence" value="ECO:0000304"/>
    <property type="project" value="Reactome"/>
</dbReference>
<dbReference type="GO" id="GO:1904813">
    <property type="term" value="C:ficolin-1-rich granule lumen"/>
    <property type="evidence" value="ECO:0000304"/>
    <property type="project" value="Reactome"/>
</dbReference>
<dbReference type="GO" id="GO:0005794">
    <property type="term" value="C:Golgi apparatus"/>
    <property type="evidence" value="ECO:0000314"/>
    <property type="project" value="HPA"/>
</dbReference>
<dbReference type="GO" id="GO:0016020">
    <property type="term" value="C:membrane"/>
    <property type="evidence" value="ECO:0007005"/>
    <property type="project" value="UniProtKB"/>
</dbReference>
<dbReference type="GO" id="GO:0005654">
    <property type="term" value="C:nucleoplasm"/>
    <property type="evidence" value="ECO:0000314"/>
    <property type="project" value="HPA"/>
</dbReference>
<dbReference type="GO" id="GO:0005634">
    <property type="term" value="C:nucleus"/>
    <property type="evidence" value="ECO:0000314"/>
    <property type="project" value="UniProtKB"/>
</dbReference>
<dbReference type="GO" id="GO:0034774">
    <property type="term" value="C:secretory granule lumen"/>
    <property type="evidence" value="ECO:0000304"/>
    <property type="project" value="Reactome"/>
</dbReference>
<dbReference type="GO" id="GO:0000151">
    <property type="term" value="C:ubiquitin ligase complex"/>
    <property type="evidence" value="ECO:0000314"/>
    <property type="project" value="UniProtKB"/>
</dbReference>
<dbReference type="GO" id="GO:0017025">
    <property type="term" value="F:TBP-class protein binding"/>
    <property type="evidence" value="ECO:0007669"/>
    <property type="project" value="Ensembl"/>
</dbReference>
<dbReference type="GO" id="GO:0030154">
    <property type="term" value="P:cell differentiation"/>
    <property type="evidence" value="ECO:0000314"/>
    <property type="project" value="UniProtKB"/>
</dbReference>
<dbReference type="GO" id="GO:0043086">
    <property type="term" value="P:negative regulation of catalytic activity"/>
    <property type="evidence" value="ECO:0000314"/>
    <property type="project" value="UniProtKB"/>
</dbReference>
<dbReference type="GO" id="GO:0045899">
    <property type="term" value="P:positive regulation of RNA polymerase II transcription preinitiation complex assembly"/>
    <property type="evidence" value="ECO:0007669"/>
    <property type="project" value="Ensembl"/>
</dbReference>
<dbReference type="GO" id="GO:0016567">
    <property type="term" value="P:protein ubiquitination"/>
    <property type="evidence" value="ECO:0000314"/>
    <property type="project" value="UniProtKB"/>
</dbReference>
<dbReference type="GO" id="GO:0010265">
    <property type="term" value="P:SCF complex assembly"/>
    <property type="evidence" value="ECO:0000314"/>
    <property type="project" value="UniProtKB"/>
</dbReference>
<dbReference type="FunFam" id="1.25.10.10:FF:000047">
    <property type="entry name" value="Cullin-associated NEDD8-dissociated protein 1"/>
    <property type="match status" value="1"/>
</dbReference>
<dbReference type="Gene3D" id="1.25.10.10">
    <property type="entry name" value="Leucine-rich Repeat Variant"/>
    <property type="match status" value="1"/>
</dbReference>
<dbReference type="IDEAL" id="IID00089"/>
<dbReference type="InterPro" id="IPR011989">
    <property type="entry name" value="ARM-like"/>
</dbReference>
<dbReference type="InterPro" id="IPR016024">
    <property type="entry name" value="ARM-type_fold"/>
</dbReference>
<dbReference type="InterPro" id="IPR039852">
    <property type="entry name" value="CAND1/CAND2"/>
</dbReference>
<dbReference type="InterPro" id="IPR013932">
    <property type="entry name" value="TATA-bd_TIP120"/>
</dbReference>
<dbReference type="PANTHER" id="PTHR12696">
    <property type="entry name" value="TIP120"/>
    <property type="match status" value="1"/>
</dbReference>
<dbReference type="Pfam" id="PF13513">
    <property type="entry name" value="HEAT_EZ"/>
    <property type="match status" value="1"/>
</dbReference>
<dbReference type="Pfam" id="PF08623">
    <property type="entry name" value="TIP120"/>
    <property type="match status" value="1"/>
</dbReference>
<dbReference type="SUPFAM" id="SSF48371">
    <property type="entry name" value="ARM repeat"/>
    <property type="match status" value="1"/>
</dbReference>
<comment type="function">
    <text evidence="3 4 5 8 10 13">Key assembly factor of SCF (SKP1-CUL1-F-box protein) E3 ubiquitin ligase complexes that promotes the exchange of the substrate-recognition F-box subunit in SCF complexes, thereby playing a key role in the cellular repertoire of SCF complexes. Acts as a F-box protein exchange factor. The exchange activity of CAND1 is coupled with cycles of neddylation conjugation: in the deneddylated state, cullin-binding CAND1 binds CUL1-RBX1, increasing dissociation of the SCF complex and promoting exchange of the F-box protein. Probably plays a similar role in other cullin-RING E3 ubiquitin ligase complexes.</text>
</comment>
<comment type="subunit">
    <text evidence="1 3 4 5 7 8 10 11 12 14 15 16 17">Interacts with TBP (By similarity). Part of a complex that contains CUL1 and RBX1. Interacts with unneddylated cullins: interacts with CUL1, CUL2, CUL3, CUL4A, CUL4B and CUL5. Does not bind neddylated CUL1. Interaction with cullins is abolished in presence of COMMD1, which antagonizes with CAND1 for interacting with cullins. Interacts with ERCC6 (PubMed:26030138). Interacts with DCUN1D1, DCUN1D2, DCUN1D3, DCUN1D4 and DCUN1D5; these interactions are bridged by cullins and strongly inhibits the neddylation of cullins (PubMed:24192928, PubMed:25349211, PubMed:26906416).</text>
</comment>
<comment type="interaction">
    <interactant intactId="EBI-456077">
        <id>Q86VP6</id>
    </interactant>
    <interactant intactId="EBI-359390">
        <id>Q13616</id>
        <label>CUL1</label>
    </interactant>
    <organismsDiffer>false</organismsDiffer>
    <experiments>33</experiments>
</comment>
<comment type="interaction">
    <interactant intactId="EBI-456077">
        <id>Q86VP6</id>
    </interactant>
    <interactant intactId="EBI-456179">
        <id>Q13617</id>
        <label>CUL2</label>
    </interactant>
    <organismsDiffer>false</organismsDiffer>
    <experiments>3</experiments>
</comment>
<comment type="interaction">
    <interactant intactId="EBI-456077">
        <id>Q86VP6</id>
    </interactant>
    <interactant intactId="EBI-456129">
        <id>Q13618</id>
        <label>CUL3</label>
    </interactant>
    <organismsDiffer>false</organismsDiffer>
    <experiments>8</experiments>
</comment>
<comment type="interaction">
    <interactant intactId="EBI-456077">
        <id>Q86VP6</id>
    </interactant>
    <interactant intactId="EBI-456106">
        <id>Q13619</id>
        <label>CUL4A</label>
    </interactant>
    <organismsDiffer>false</organismsDiffer>
    <experiments>6</experiments>
</comment>
<comment type="interaction">
    <interactant intactId="EBI-456077">
        <id>Q86VP6</id>
    </interactant>
    <interactant intactId="EBI-456067">
        <id>Q13620</id>
        <label>CUL4B</label>
    </interactant>
    <organismsDiffer>false</organismsDiffer>
    <experiments>13</experiments>
</comment>
<comment type="interaction">
    <interactant intactId="EBI-456077">
        <id>Q86VP6</id>
    </interactant>
    <interactant intactId="EBI-350581">
        <id>P46776</id>
        <label>RPL27A</label>
    </interactant>
    <organismsDiffer>false</organismsDiffer>
    <experiments>2</experiments>
</comment>
<comment type="subcellular location">
    <subcellularLocation>
        <location evidence="10">Cytoplasm</location>
    </subcellularLocation>
    <subcellularLocation>
        <location evidence="10">Nucleus</location>
    </subcellularLocation>
    <text>Predominantly cytoplasmic.</text>
</comment>
<comment type="alternative products">
    <event type="alternative splicing"/>
    <isoform>
        <id>Q86VP6-1</id>
        <name>1</name>
        <sequence type="displayed"/>
    </isoform>
    <isoform>
        <id>Q86VP6-2</id>
        <name>2</name>
        <sequence type="described" ref="VSP_013948"/>
    </isoform>
    <isoform>
        <id>Q86VP6-3</id>
        <name>3</name>
        <sequence type="described" ref="VSP_013947 VSP_013949 VSP_013950"/>
    </isoform>
</comment>
<comment type="induction">
    <text evidence="9">Repressed by miR-148a.</text>
</comment>
<comment type="miscellaneous">
    <text evidence="23">A model has been proposed to explain the mechanisms of cullin-RING E3 ubiquitin ligase complexes assembly. According to this hypothesis, cullin-RING E3 ubiquitin ligase complexes exist in a 'stable' active state when saturated with substrate, occluding access to deneddylation by the COP9 signalosome (CSN) complex. The neddylation-conjugated cullin-RING E3 ubiquitin ligase complexes mediate ubiquitination of substrates and can recruit downstream factors involved in substrate degradation. Depletion of the substrate promotes the ability of CSN to bind the cullin-RING E3 ubiquitin ligase complex and mediate deneddylation. In this 'intermediate' deneddylated state, the complex can bind CAND1 and enter the 'exchange' state, resulting in high increase in dissociation rate of the substrate-recognition subunit. The resulting CAND1-cullin-RING complex rapidly assembles with another available substrate-recognition subunit to form an unstable ternary intermediate and yield a new cullin-RING E3 ubiquitin ligase complex. Subsequent neddylation of the cullin, which is stabilized by substrate, completes the cycle (PubMed:23453757).</text>
</comment>
<comment type="similarity">
    <text evidence="22">Belongs to the CAND family.</text>
</comment>
<comment type="sequence caution" evidence="22">
    <conflict type="erroneous initiation">
        <sequence resource="EMBL-CDS" id="BAA74852"/>
    </conflict>
    <text>Extended N-terminus.</text>
</comment>
<comment type="sequence caution" evidence="22">
    <conflict type="erroneous initiation">
        <sequence resource="EMBL-CDS" id="BAB55090"/>
    </conflict>
    <text>Truncated N-terminus.</text>
</comment>
<name>CAND1_HUMAN</name>
<gene>
    <name type="primary">CAND1</name>
    <name type="synonym">KIAA0829</name>
    <name type="synonym">TIP120</name>
    <name type="synonym">TIP120A</name>
</gene>
<reference key="1">
    <citation type="journal article" date="1998" name="DNA Res.">
        <title>Prediction of the coding sequences of unidentified human genes. XII. The complete sequences of 100 new cDNA clones from brain which code for large proteins in vitro.</title>
        <authorList>
            <person name="Nagase T."/>
            <person name="Ishikawa K."/>
            <person name="Suyama M."/>
            <person name="Kikuno R."/>
            <person name="Hirosawa M."/>
            <person name="Miyajima N."/>
            <person name="Tanaka A."/>
            <person name="Kotani H."/>
            <person name="Nomura N."/>
            <person name="Ohara O."/>
        </authorList>
    </citation>
    <scope>NUCLEOTIDE SEQUENCE [LARGE SCALE MRNA] (ISOFORM 1)</scope>
    <source>
        <tissue>Brain</tissue>
    </source>
</reference>
<reference key="2">
    <citation type="submission" date="2005-08" db="EMBL/GenBank/DDBJ databases">
        <authorList>
            <person name="Ohara O."/>
            <person name="Nagase T."/>
            <person name="Kikuno R."/>
            <person name="Ishikawa K."/>
            <person name="Suyama M."/>
        </authorList>
    </citation>
    <scope>SEQUENCE REVISION</scope>
</reference>
<reference key="3">
    <citation type="journal article" date="2000" name="Proc. Natl. Acad. Sci. U.S.A.">
        <title>Gene expression profiling in the human hypothalamus-pituitary-adrenal axis and full-length cDNA cloning.</title>
        <authorList>
            <person name="Hu R.-M."/>
            <person name="Han Z.-G."/>
            <person name="Song H.-D."/>
            <person name="Peng Y.-D."/>
            <person name="Huang Q.-H."/>
            <person name="Ren S.-X."/>
            <person name="Gu Y.-J."/>
            <person name="Huang C.-H."/>
            <person name="Li Y.-B."/>
            <person name="Jiang C.-L."/>
            <person name="Fu G."/>
            <person name="Zhang Q.-H."/>
            <person name="Gu B.-W."/>
            <person name="Dai M."/>
            <person name="Mao Y.-F."/>
            <person name="Gao G.-F."/>
            <person name="Rong R."/>
            <person name="Ye M."/>
            <person name="Zhou J."/>
            <person name="Xu S.-H."/>
            <person name="Gu J."/>
            <person name="Shi J.-X."/>
            <person name="Jin W.-R."/>
            <person name="Zhang C.-K."/>
            <person name="Wu T.-M."/>
            <person name="Huang G.-Y."/>
            <person name="Chen Z."/>
            <person name="Chen M.-D."/>
            <person name="Chen J.-L."/>
        </authorList>
    </citation>
    <scope>NUCLEOTIDE SEQUENCE [LARGE SCALE MRNA] (ISOFORM 1)</scope>
    <source>
        <tissue>Adrenal gland</tissue>
    </source>
</reference>
<reference key="4">
    <citation type="journal article" date="2001" name="Genome Res.">
        <title>Towards a catalog of human genes and proteins: sequencing and analysis of 500 novel complete protein coding human cDNAs.</title>
        <authorList>
            <person name="Wiemann S."/>
            <person name="Weil B."/>
            <person name="Wellenreuther R."/>
            <person name="Gassenhuber J."/>
            <person name="Glassl S."/>
            <person name="Ansorge W."/>
            <person name="Boecher M."/>
            <person name="Bloecker H."/>
            <person name="Bauersachs S."/>
            <person name="Blum H."/>
            <person name="Lauber J."/>
            <person name="Duesterhoeft A."/>
            <person name="Beyer A."/>
            <person name="Koehrer K."/>
            <person name="Strack N."/>
            <person name="Mewes H.-W."/>
            <person name="Ottenwaelder B."/>
            <person name="Obermaier B."/>
            <person name="Tampe J."/>
            <person name="Heubner D."/>
            <person name="Wambutt R."/>
            <person name="Korn B."/>
            <person name="Klein M."/>
            <person name="Poustka A."/>
        </authorList>
    </citation>
    <scope>NUCLEOTIDE SEQUENCE [LARGE SCALE MRNA] (ISOFORMS 1 AND 2)</scope>
    <source>
        <tissue>Testis</tissue>
    </source>
</reference>
<reference key="5">
    <citation type="submission" date="2005-07" db="EMBL/GenBank/DDBJ databases">
        <authorList>
            <person name="Mural R.J."/>
            <person name="Istrail S."/>
            <person name="Sutton G.G."/>
            <person name="Florea L."/>
            <person name="Halpern A.L."/>
            <person name="Mobarry C.M."/>
            <person name="Lippert R."/>
            <person name="Walenz B."/>
            <person name="Shatkay H."/>
            <person name="Dew I."/>
            <person name="Miller J.R."/>
            <person name="Flanigan M.J."/>
            <person name="Edwards N.J."/>
            <person name="Bolanos R."/>
            <person name="Fasulo D."/>
            <person name="Halldorsson B.V."/>
            <person name="Hannenhalli S."/>
            <person name="Turner R."/>
            <person name="Yooseph S."/>
            <person name="Lu F."/>
            <person name="Nusskern D.R."/>
            <person name="Shue B.C."/>
            <person name="Zheng X.H."/>
            <person name="Zhong F."/>
            <person name="Delcher A.L."/>
            <person name="Huson D.H."/>
            <person name="Kravitz S.A."/>
            <person name="Mouchard L."/>
            <person name="Reinert K."/>
            <person name="Remington K.A."/>
            <person name="Clark A.G."/>
            <person name="Waterman M.S."/>
            <person name="Eichler E.E."/>
            <person name="Adams M.D."/>
            <person name="Hunkapiller M.W."/>
            <person name="Myers E.W."/>
            <person name="Venter J.C."/>
        </authorList>
    </citation>
    <scope>NUCLEOTIDE SEQUENCE [LARGE SCALE GENOMIC DNA]</scope>
</reference>
<reference key="6">
    <citation type="journal article" date="2004" name="Genome Res.">
        <title>The status, quality, and expansion of the NIH full-length cDNA project: the Mammalian Gene Collection (MGC).</title>
        <authorList>
            <consortium name="The MGC Project Team"/>
        </authorList>
    </citation>
    <scope>NUCLEOTIDE SEQUENCE [LARGE SCALE MRNA] (ISOFORM 1)</scope>
    <scope>VARIANT VAL-952</scope>
    <source>
        <tissue>Cervix</tissue>
        <tissue>Testis</tissue>
        <tissue>Uterus</tissue>
    </source>
</reference>
<reference key="7">
    <citation type="journal article" date="2004" name="Nat. Genet.">
        <title>Complete sequencing and characterization of 21,243 full-length human cDNAs.</title>
        <authorList>
            <person name="Ota T."/>
            <person name="Suzuki Y."/>
            <person name="Nishikawa T."/>
            <person name="Otsuki T."/>
            <person name="Sugiyama T."/>
            <person name="Irie R."/>
            <person name="Wakamatsu A."/>
            <person name="Hayashi K."/>
            <person name="Sato H."/>
            <person name="Nagai K."/>
            <person name="Kimura K."/>
            <person name="Makita H."/>
            <person name="Sekine M."/>
            <person name="Obayashi M."/>
            <person name="Nishi T."/>
            <person name="Shibahara T."/>
            <person name="Tanaka T."/>
            <person name="Ishii S."/>
            <person name="Yamamoto J."/>
            <person name="Saito K."/>
            <person name="Kawai Y."/>
            <person name="Isono Y."/>
            <person name="Nakamura Y."/>
            <person name="Nagahari K."/>
            <person name="Murakami K."/>
            <person name="Yasuda T."/>
            <person name="Iwayanagi T."/>
            <person name="Wagatsuma M."/>
            <person name="Shiratori A."/>
            <person name="Sudo H."/>
            <person name="Hosoiri T."/>
            <person name="Kaku Y."/>
            <person name="Kodaira H."/>
            <person name="Kondo H."/>
            <person name="Sugawara M."/>
            <person name="Takahashi M."/>
            <person name="Kanda K."/>
            <person name="Yokoi T."/>
            <person name="Furuya T."/>
            <person name="Kikkawa E."/>
            <person name="Omura Y."/>
            <person name="Abe K."/>
            <person name="Kamihara K."/>
            <person name="Katsuta N."/>
            <person name="Sato K."/>
            <person name="Tanikawa M."/>
            <person name="Yamazaki M."/>
            <person name="Ninomiya K."/>
            <person name="Ishibashi T."/>
            <person name="Yamashita H."/>
            <person name="Murakawa K."/>
            <person name="Fujimori K."/>
            <person name="Tanai H."/>
            <person name="Kimata M."/>
            <person name="Watanabe M."/>
            <person name="Hiraoka S."/>
            <person name="Chiba Y."/>
            <person name="Ishida S."/>
            <person name="Ono Y."/>
            <person name="Takiguchi S."/>
            <person name="Watanabe S."/>
            <person name="Yosida M."/>
            <person name="Hotuta T."/>
            <person name="Kusano J."/>
            <person name="Kanehori K."/>
            <person name="Takahashi-Fujii A."/>
            <person name="Hara H."/>
            <person name="Tanase T.-O."/>
            <person name="Nomura Y."/>
            <person name="Togiya S."/>
            <person name="Komai F."/>
            <person name="Hara R."/>
            <person name="Takeuchi K."/>
            <person name="Arita M."/>
            <person name="Imose N."/>
            <person name="Musashino K."/>
            <person name="Yuuki H."/>
            <person name="Oshima A."/>
            <person name="Sasaki N."/>
            <person name="Aotsuka S."/>
            <person name="Yoshikawa Y."/>
            <person name="Matsunawa H."/>
            <person name="Ichihara T."/>
            <person name="Shiohata N."/>
            <person name="Sano S."/>
            <person name="Moriya S."/>
            <person name="Momiyama H."/>
            <person name="Satoh N."/>
            <person name="Takami S."/>
            <person name="Terashima Y."/>
            <person name="Suzuki O."/>
            <person name="Nakagawa S."/>
            <person name="Senoh A."/>
            <person name="Mizoguchi H."/>
            <person name="Goto Y."/>
            <person name="Shimizu F."/>
            <person name="Wakebe H."/>
            <person name="Hishigaki H."/>
            <person name="Watanabe T."/>
            <person name="Sugiyama A."/>
            <person name="Takemoto M."/>
            <person name="Kawakami B."/>
            <person name="Yamazaki M."/>
            <person name="Watanabe K."/>
            <person name="Kumagai A."/>
            <person name="Itakura S."/>
            <person name="Fukuzumi Y."/>
            <person name="Fujimori Y."/>
            <person name="Komiyama M."/>
            <person name="Tashiro H."/>
            <person name="Tanigami A."/>
            <person name="Fujiwara T."/>
            <person name="Ono T."/>
            <person name="Yamada K."/>
            <person name="Fujii Y."/>
            <person name="Ozaki K."/>
            <person name="Hirao M."/>
            <person name="Ohmori Y."/>
            <person name="Kawabata A."/>
            <person name="Hikiji T."/>
            <person name="Kobatake N."/>
            <person name="Inagaki H."/>
            <person name="Ikema Y."/>
            <person name="Okamoto S."/>
            <person name="Okitani R."/>
            <person name="Kawakami T."/>
            <person name="Noguchi S."/>
            <person name="Itoh T."/>
            <person name="Shigeta K."/>
            <person name="Senba T."/>
            <person name="Matsumura K."/>
            <person name="Nakajima Y."/>
            <person name="Mizuno T."/>
            <person name="Morinaga M."/>
            <person name="Sasaki M."/>
            <person name="Togashi T."/>
            <person name="Oyama M."/>
            <person name="Hata H."/>
            <person name="Watanabe M."/>
            <person name="Komatsu T."/>
            <person name="Mizushima-Sugano J."/>
            <person name="Satoh T."/>
            <person name="Shirai Y."/>
            <person name="Takahashi Y."/>
            <person name="Nakagawa K."/>
            <person name="Okumura K."/>
            <person name="Nagase T."/>
            <person name="Nomura N."/>
            <person name="Kikuchi H."/>
            <person name="Masuho Y."/>
            <person name="Yamashita R."/>
            <person name="Nakai K."/>
            <person name="Yada T."/>
            <person name="Nakamura Y."/>
            <person name="Ohara O."/>
            <person name="Isogai T."/>
            <person name="Sugano S."/>
        </authorList>
    </citation>
    <scope>NUCLEOTIDE SEQUENCE [LARGE SCALE MRNA] (ISOFORMS 1 AND 3)</scope>
    <source>
        <tissue>Placenta</tissue>
    </source>
</reference>
<reference key="8">
    <citation type="submission" date="2009-03" db="UniProtKB">
        <authorList>
            <person name="Bienvenut W.V."/>
            <person name="Ramsay A."/>
            <person name="Leung H.Y."/>
        </authorList>
    </citation>
    <scope>PROTEIN SEQUENCE OF 2-14 AND 374-382</scope>
    <scope>CLEAVAGE OF INITIATOR METHIONINE</scope>
    <scope>ACETYLATION AT ALA-2</scope>
    <scope>IDENTIFICATION BY MASS SPECTROMETRY</scope>
    <source>
        <tissue>Embryonic kidney</tissue>
    </source>
</reference>
<reference key="9">
    <citation type="submission" date="2009-03" db="UniProtKB">
        <authorList>
            <person name="Bienvenut W.V."/>
            <person name="Waridel P."/>
            <person name="Quadroni M."/>
        </authorList>
    </citation>
    <scope>PROTEIN SEQUENCE OF 2-14; 535-548; 668-679; 730-743; 859-873; 958-969 AND 983-990</scope>
    <scope>CLEAVAGE OF INITIATOR METHIONINE</scope>
    <scope>ACETYLATION AT ALA-2</scope>
    <scope>IDENTIFICATION BY MASS SPECTROMETRY</scope>
    <source>
        <tissue>Embryonic kidney</tissue>
    </source>
</reference>
<reference key="10">
    <citation type="journal article" date="2002" name="Mol. Cell">
        <title>CAND1 binds to unneddylated CUL1 and regulates the formation of SCF ubiquitin E3 ligase complex.</title>
        <authorList>
            <person name="Zheng J."/>
            <person name="Yang X."/>
            <person name="Harrell J.M."/>
            <person name="Ryzhikov S."/>
            <person name="Shim E.-H."/>
            <person name="Lykke-Andersen K."/>
            <person name="Wei N."/>
            <person name="Sun H."/>
            <person name="Kobayashi R."/>
            <person name="Zhang H."/>
        </authorList>
    </citation>
    <scope>PARTIAL PROTEIN SEQUENCE</scope>
    <scope>FUNCTION</scope>
    <scope>IDENTIFICATION IN A COMPLEX WITH CUL1 AND RBX1</scope>
</reference>
<reference key="11">
    <citation type="journal article" date="2002" name="Mol. Cell">
        <title>NEDD8 modification of CUL1 dissociates p120(CAND1), an inhibitor of CUL1-SKP1 binding and SCF ligases.</title>
        <authorList>
            <person name="Liu J."/>
            <person name="Furukawa M."/>
            <person name="Matsumoto T."/>
            <person name="Xiong Y."/>
        </authorList>
    </citation>
    <scope>FUNCTION</scope>
    <scope>IDENTIFICATION IN A COMPLEX WITH CUL1 AND RBX1</scope>
    <scope>INTERACTION WITH UNNEDDYLATED CUL1; CUL4A AND CUL5</scope>
</reference>
<reference key="12">
    <citation type="journal article" date="2003" name="J. Biol. Chem.">
        <title>TIP120A associates with cullins and modulates ubiquitin ligase activity.</title>
        <authorList>
            <person name="Min K.-W."/>
            <person name="Hwang J.-W."/>
            <person name="Lee J.-S."/>
            <person name="Park Y."/>
            <person name="Tamura T.-A."/>
            <person name="Yoon J.-B."/>
        </authorList>
    </citation>
    <scope>FUNCTION</scope>
    <scope>INTERACTION WITH CUL1; CUL2; CUL3; CUL4A; CUL4B AND RBX1</scope>
    <scope>IDENTIFICATION BY MASS SPECTROMETRY</scope>
</reference>
<reference key="13">
    <citation type="journal article" date="2006" name="Mol. Cell. Biol.">
        <title>CAND1-mediated substrate adaptor recycling is required for efficient repression of Nrf2 by Keap1.</title>
        <authorList>
            <person name="Lo S.C."/>
            <person name="Hannink M."/>
        </authorList>
    </citation>
    <scope>FUNCTION</scope>
    <scope>INTERACTION WITH CUL3</scope>
</reference>
<reference key="14">
    <citation type="journal article" date="2008" name="Mol. Cell">
        <title>Kinase-selective enrichment enables quantitative phosphoproteomics of the kinome across the cell cycle.</title>
        <authorList>
            <person name="Daub H."/>
            <person name="Olsen J.V."/>
            <person name="Bairlein M."/>
            <person name="Gnad F."/>
            <person name="Oppermann F.S."/>
            <person name="Korner R."/>
            <person name="Greff Z."/>
            <person name="Keri G."/>
            <person name="Stemmann O."/>
            <person name="Mann M."/>
        </authorList>
    </citation>
    <scope>PHOSPHORYLATION [LARGE SCALE ANALYSIS] AT SER-335</scope>
    <scope>IDENTIFICATION BY MASS SPECTROMETRY [LARGE SCALE ANALYSIS]</scope>
    <source>
        <tissue>Cervix carcinoma</tissue>
    </source>
</reference>
<reference key="15">
    <citation type="journal article" date="2008" name="Proc. Natl. Acad. Sci. U.S.A.">
        <title>A quantitative atlas of mitotic phosphorylation.</title>
        <authorList>
            <person name="Dephoure N."/>
            <person name="Zhou C."/>
            <person name="Villen J."/>
            <person name="Beausoleil S.A."/>
            <person name="Bakalarski C.E."/>
            <person name="Elledge S.J."/>
            <person name="Gygi S.P."/>
        </authorList>
    </citation>
    <scope>IDENTIFICATION BY MASS SPECTROMETRY [LARGE SCALE ANALYSIS]</scope>
    <source>
        <tissue>Cervix carcinoma</tissue>
    </source>
</reference>
<reference key="16">
    <citation type="journal article" date="2009" name="Anal. Chem.">
        <title>Lys-N and trypsin cover complementary parts of the phosphoproteome in a refined SCX-based approach.</title>
        <authorList>
            <person name="Gauci S."/>
            <person name="Helbig A.O."/>
            <person name="Slijper M."/>
            <person name="Krijgsveld J."/>
            <person name="Heck A.J."/>
            <person name="Mohammed S."/>
        </authorList>
    </citation>
    <scope>ACETYLATION [LARGE SCALE ANALYSIS] AT ALA-2</scope>
    <scope>CLEAVAGE OF INITIATOR METHIONINE [LARGE SCALE ANALYSIS]</scope>
    <scope>IDENTIFICATION BY MASS SPECTROMETRY [LARGE SCALE ANALYSIS]</scope>
</reference>
<reference key="17">
    <citation type="journal article" date="2009" name="Science">
        <title>Lysine acetylation targets protein complexes and co-regulates major cellular functions.</title>
        <authorList>
            <person name="Choudhary C."/>
            <person name="Kumar C."/>
            <person name="Gnad F."/>
            <person name="Nielsen M.L."/>
            <person name="Rehman M."/>
            <person name="Walther T.C."/>
            <person name="Olsen J.V."/>
            <person name="Mann M."/>
        </authorList>
    </citation>
    <scope>ACETYLATION [LARGE SCALE ANALYSIS] AT LYS-55 AND LYS-971</scope>
    <scope>IDENTIFICATION BY MASS SPECTROMETRY [LARGE SCALE ANALYSIS]</scope>
</reference>
<reference key="18">
    <citation type="journal article" date="2010" name="Prostate Cancer Prostatic Dis.">
        <title>miR-148a is an androgen-responsive microRNA that promotes LNCaP prostate cell growth by repressing its target CAND1 expression.</title>
        <authorList>
            <person name="Murata T."/>
            <person name="Takayama K."/>
            <person name="Katayama S."/>
            <person name="Urano T."/>
            <person name="Horie-Inoue K."/>
            <person name="Ikeda K."/>
            <person name="Takahashi S."/>
            <person name="Kawazu C."/>
            <person name="Hasegawa A."/>
            <person name="Ouchi Y."/>
            <person name="Homma Y."/>
            <person name="Hayashizaki Y."/>
            <person name="Inoue S."/>
        </authorList>
    </citation>
    <scope>INDUCTION</scope>
</reference>
<reference key="19">
    <citation type="journal article" date="2011" name="BMC Syst. Biol.">
        <title>Initial characterization of the human central proteome.</title>
        <authorList>
            <person name="Burkard T.R."/>
            <person name="Planyavsky M."/>
            <person name="Kaupe I."/>
            <person name="Breitwieser F.P."/>
            <person name="Buerckstuemmer T."/>
            <person name="Bennett K.L."/>
            <person name="Superti-Furga G."/>
            <person name="Colinge J."/>
        </authorList>
    </citation>
    <scope>IDENTIFICATION BY MASS SPECTROMETRY [LARGE SCALE ANALYSIS]</scope>
</reference>
<reference key="20">
    <citation type="journal article" date="2011" name="J. Biol. Chem.">
        <title>COMMD1 (copper metabolism MURR1 domain-containing protein 1) regulates Cullin RING ligases by preventing CAND1 (Cullin-associated Nedd8-dissociated protein 1) binding.</title>
        <authorList>
            <person name="Mao X."/>
            <person name="Gluck N."/>
            <person name="Chen B."/>
            <person name="Starokadomskyy P."/>
            <person name="Li H."/>
            <person name="Maine G.N."/>
            <person name="Burstein E."/>
        </authorList>
    </citation>
    <scope>INTERACTION WITH CUL2</scope>
</reference>
<reference key="21">
    <citation type="journal article" date="2011" name="PLoS ONE">
        <title>Regulation of cullin RING E3 ubiquitin ligases by CAND1 in vivo.</title>
        <authorList>
            <person name="Chua Y.S."/>
            <person name="Boh B.K."/>
            <person name="Ponyeam W."/>
            <person name="Hagen T."/>
        </authorList>
    </citation>
    <scope>FUNCTION</scope>
    <scope>INTERACTION WITH CUL2; CUL3; CUL4A AND CUL5</scope>
    <scope>SUBCELLULAR LOCATION</scope>
</reference>
<reference key="22">
    <citation type="journal article" date="2012" name="Mol. Cell. Proteomics">
        <title>Comparative large-scale characterisation of plant vs. mammal proteins reveals similar and idiosyncratic N-alpha acetylation features.</title>
        <authorList>
            <person name="Bienvenut W.V."/>
            <person name="Sumpton D."/>
            <person name="Martinez A."/>
            <person name="Lilla S."/>
            <person name="Espagne C."/>
            <person name="Meinnel T."/>
            <person name="Giglione C."/>
        </authorList>
    </citation>
    <scope>ACETYLATION [LARGE SCALE ANALYSIS] AT ALA-2</scope>
    <scope>CLEAVAGE OF INITIATOR METHIONINE [LARGE SCALE ANALYSIS]</scope>
    <scope>IDENTIFICATION BY MASS SPECTROMETRY [LARGE SCALE ANALYSIS]</scope>
</reference>
<reference key="23">
    <citation type="journal article" date="2012" name="Proc. Natl. Acad. Sci. U.S.A.">
        <title>N-terminal acetylome analyses and functional insights of the N-terminal acetyltransferase NatB.</title>
        <authorList>
            <person name="Van Damme P."/>
            <person name="Lasa M."/>
            <person name="Polevoda B."/>
            <person name="Gazquez C."/>
            <person name="Elosegui-Artola A."/>
            <person name="Kim D.S."/>
            <person name="De Juan-Pardo E."/>
            <person name="Demeyer K."/>
            <person name="Hole K."/>
            <person name="Larrea E."/>
            <person name="Timmerman E."/>
            <person name="Prieto J."/>
            <person name="Arnesen T."/>
            <person name="Sherman F."/>
            <person name="Gevaert K."/>
            <person name="Aldabe R."/>
        </authorList>
    </citation>
    <scope>IDENTIFICATION BY MASS SPECTROMETRY [LARGE SCALE ANALYSIS]</scope>
</reference>
<reference key="24">
    <citation type="journal article" date="2013" name="Cell">
        <title>Cand1 promotes assembly of new SCF complexes through dynamic exchange of F box proteins.</title>
        <authorList>
            <person name="Pierce N.W."/>
            <person name="Lee J.E."/>
            <person name="Liu X."/>
            <person name="Sweredoski M.J."/>
            <person name="Graham R.L."/>
            <person name="Larimore E.A."/>
            <person name="Rome M."/>
            <person name="Zheng N."/>
            <person name="Clurman B.E."/>
            <person name="Hess S."/>
            <person name="Shan S.O."/>
            <person name="Deshaies R.J."/>
        </authorList>
    </citation>
    <scope>FUNCTION</scope>
    <scope>REACTION MECHANISM</scope>
</reference>
<reference key="25">
    <citation type="journal article" date="2013" name="J. Proteome Res.">
        <title>Toward a comprehensive characterization of a human cancer cell phosphoproteome.</title>
        <authorList>
            <person name="Zhou H."/>
            <person name="Di Palma S."/>
            <person name="Preisinger C."/>
            <person name="Peng M."/>
            <person name="Polat A.N."/>
            <person name="Heck A.J."/>
            <person name="Mohammed S."/>
        </authorList>
    </citation>
    <scope>PHOSPHORYLATION [LARGE SCALE ANALYSIS] AT SER-558</scope>
    <scope>IDENTIFICATION BY MASS SPECTROMETRY [LARGE SCALE ANALYSIS]</scope>
    <source>
        <tissue>Cervix carcinoma</tissue>
        <tissue>Erythroleukemia</tissue>
    </source>
</reference>
<reference key="26">
    <citation type="journal article" date="2014" name="Clin. Cancer Res.">
        <title>Oncogenic function of SCCRO5/DCUN1D5 requires its Neddylation E3 activity and nuclear localization.</title>
        <authorList>
            <person name="Bommelje C.C."/>
            <person name="Weeda V.B."/>
            <person name="Huang G."/>
            <person name="Shah K."/>
            <person name="Bains S."/>
            <person name="Buss E."/>
            <person name="Shaha M."/>
            <person name="Goenen M."/>
            <person name="Ghossein R."/>
            <person name="Ramanathan S.Y."/>
            <person name="Singh B."/>
        </authorList>
    </citation>
    <scope>INTERACTION WITH DCUN1D5</scope>
</reference>
<reference key="27">
    <citation type="journal article" date="2014" name="J. Biol. Chem.">
        <title>SCCRO3 (DCUN1D3) antagonizes the neddylation and oncogenic activity of SCCRO (DCUN1D1).</title>
        <authorList>
            <person name="Huang G."/>
            <person name="Stock C."/>
            <person name="Bommelje C.C."/>
            <person name="Weeda V.B."/>
            <person name="Shah K."/>
            <person name="Bains S."/>
            <person name="Buss E."/>
            <person name="Shaha M."/>
            <person name="Rechler W."/>
            <person name="Ramanathan S.Y."/>
            <person name="Singh B."/>
        </authorList>
    </citation>
    <scope>INTERACTION WITH DCUN1D3</scope>
</reference>
<reference key="28">
    <citation type="journal article" date="2014" name="J. Proteomics">
        <title>An enzyme assisted RP-RPLC approach for in-depth analysis of human liver phosphoproteome.</title>
        <authorList>
            <person name="Bian Y."/>
            <person name="Song C."/>
            <person name="Cheng K."/>
            <person name="Dong M."/>
            <person name="Wang F."/>
            <person name="Huang J."/>
            <person name="Sun D."/>
            <person name="Wang L."/>
            <person name="Ye M."/>
            <person name="Zou H."/>
        </authorList>
    </citation>
    <scope>IDENTIFICATION BY MASS SPECTROMETRY [LARGE SCALE ANALYSIS]</scope>
    <source>
        <tissue>Liver</tissue>
    </source>
</reference>
<reference key="29">
    <citation type="journal article" date="2015" name="PLoS ONE">
        <title>Identification of Novel Proteins Co-Purifying with Cockayne Syndrome Group B (CSB) Reveals Potential Roles for CSB in RNA Metabolism and Chromatin Dynamics.</title>
        <authorList>
            <person name="Nicolai S."/>
            <person name="Filippi S."/>
            <person name="Caputo M."/>
            <person name="Cipak L."/>
            <person name="Gregan J."/>
            <person name="Ammerer G."/>
            <person name="Frontini M."/>
            <person name="Willems D."/>
            <person name="Prantera G."/>
            <person name="Balajee A.S."/>
            <person name="Proietti-De-Santis L."/>
        </authorList>
    </citation>
    <scope>INTERACTION WITH ERCC6</scope>
</reference>
<reference key="30">
    <citation type="journal article" date="2015" name="Proteomics">
        <title>N-terminome analysis of the human mitochondrial proteome.</title>
        <authorList>
            <person name="Vaca Jacome A.S."/>
            <person name="Rabilloud T."/>
            <person name="Schaeffer-Reiss C."/>
            <person name="Rompais M."/>
            <person name="Ayoub D."/>
            <person name="Lane L."/>
            <person name="Bairoch A."/>
            <person name="Van Dorsselaer A."/>
            <person name="Carapito C."/>
        </authorList>
    </citation>
    <scope>IDENTIFICATION BY MASS SPECTROMETRY [LARGE SCALE ANALYSIS]</scope>
</reference>
<reference key="31">
    <citation type="journal article" date="2016" name="J. Cell Sci.">
        <title>Characterization of the mammalian family of DCN-type NEDD8 E3 ligases.</title>
        <authorList>
            <person name="Keuss M.J."/>
            <person name="Thomas Y."/>
            <person name="Mcarthur R."/>
            <person name="Wood N.T."/>
            <person name="Knebel A."/>
            <person name="Kurz T."/>
        </authorList>
    </citation>
    <scope>INTERACTION WITH DCUN1D1; DCUN1D2; DCUN1D3; DCUN1D4 AND DCUN1D5</scope>
</reference>
<reference key="32">
    <citation type="journal article" date="2004" name="Cell">
        <title>Structure of the Cand1-Cul1-Roc1 complex reveals regulatory mechanisms for the assembly of the multisubunit cullin-dependent ubiquitin ligases.</title>
        <authorList>
            <person name="Goldenberg S.J."/>
            <person name="Cascio T.C."/>
            <person name="Shumway S.D."/>
            <person name="Garbutt K.C."/>
            <person name="Liu J."/>
            <person name="Xiong Y."/>
            <person name="Zheng N."/>
        </authorList>
    </citation>
    <scope>X-RAY CRYSTALLOGRAPHY (3.1 ANGSTROMS) IN COMPLEX WITH CUL1 AND RBX1</scope>
</reference>
<reference key="33">
    <citation type="journal article" date="2011" name="Cell">
        <title>The molecular basis of CRL4DDB2/CSA ubiquitin ligase architecture, targeting, and activation.</title>
        <authorList>
            <person name="Fischer E.S."/>
            <person name="Scrima A."/>
            <person name="Bohm K."/>
            <person name="Matsumoto S."/>
            <person name="Lingaraju G.M."/>
            <person name="Faty M."/>
            <person name="Yasuda T."/>
            <person name="Cavadini S."/>
            <person name="Wakasugi M."/>
            <person name="Hanaoka F."/>
            <person name="Iwai S."/>
            <person name="Gut H."/>
            <person name="Sugasawa K."/>
            <person name="Thoma N.H."/>
        </authorList>
    </citation>
    <scope>X-RAY CRYSTALLOGRAPHY (3.8 ANGSTROMS) IN COMPLEX WITH CUL4B AND RBX1</scope>
</reference>
<protein>
    <recommendedName>
        <fullName>Cullin-associated NEDD8-dissociated protein 1</fullName>
    </recommendedName>
    <alternativeName>
        <fullName>Cullin-associated and neddylation-dissociated protein 1</fullName>
    </alternativeName>
    <alternativeName>
        <fullName>TBP-interacting protein of 120 kDa A</fullName>
        <shortName>TBP-interacting protein 120A</shortName>
    </alternativeName>
    <alternativeName>
        <fullName>p120 CAND1</fullName>
    </alternativeName>
</protein>
<organism>
    <name type="scientific">Homo sapiens</name>
    <name type="common">Human</name>
    <dbReference type="NCBI Taxonomy" id="9606"/>
    <lineage>
        <taxon>Eukaryota</taxon>
        <taxon>Metazoa</taxon>
        <taxon>Chordata</taxon>
        <taxon>Craniata</taxon>
        <taxon>Vertebrata</taxon>
        <taxon>Euteleostomi</taxon>
        <taxon>Mammalia</taxon>
        <taxon>Eutheria</taxon>
        <taxon>Euarchontoglires</taxon>
        <taxon>Primates</taxon>
        <taxon>Haplorrhini</taxon>
        <taxon>Catarrhini</taxon>
        <taxon>Hominidae</taxon>
        <taxon>Homo</taxon>
    </lineage>
</organism>
<sequence>MASASYHISNLLEKMTSSDKDFRFMATNDLMTELQKDSIKLDDDSERKVVKMILKLLEDKNGEVQNLAVKCLGPLVSKVKEYQVETIVDTLCTNMLSDKEQLRDISSIGLKTVIGELPPASSGSALAANVCKKITGRLTSAIAKQEDVSVQLEALDIMADMLSRQGGLLVNFHPSILTCLLPQLTSPRLAVRKRTIIALGHLVMSCGNIVFVDLIEHLLSELSKNDSMSTTRTYIQCIAAISRQAGHRIGEYLEKIIPLVVKFCNVDDDELREYCIQAFESFVRRCPKEVYPHVSTIINICLKYLTYDPNYNYDDEDEDENAMDADGGDDDDQGSDDEYSDDDDMSWKVRRAAAKCLDAVVSTRHEMLPEFYKTVSPALISRFKEREENVKADVFHAYLSLLKQTRPVQSWLCDPDAMEQGETPLTMLQSQVPNIVKALHKQMKEKSVKTRQCCFNMLTELVNVLPGALTQHIPVLVPGIIFSLNDKSSSSNLKIDALSCLYVILCNHSPQVFHPHVQALVPPVVACVGDPFYKITSEALLVTQQLVKVIRPLDQPSSFDATPYIKDLFTCTIKRLKAADIDQEVKERAISCMGQIICNLGDNLGSDLPNTLQIFLERLKNEITRLTTVKALTLIAGSPLKIDLRPVLGEGVPILASFLRKNQRALKLGTLSALDILIKNYSDSLTAAMIDAVLDELPPLISESDMHVSQMAISFLTTLAKVYPSSLSKISGSILNELIGLVRSPLLQGGALSAMLDFFQALVVTGTNNLGYMDLLRMLTGPVYSQSTALTHKQSYYSIAKCVAALTRACPKEGPAVVGQFIQDVKNSRSTDSIRLLALLSLGEVGHHIDLSGQLELKSVILEAFSSPSEEVKSAASYALGSISVGNLPEYLPFVLQEITSQPKRQYLLLHSLKEIISSASVVGLKPYVENIWALLLKHCECAEEGTRNVVAECLGKLTLIDPETLLPRLKGYLISGSSYARSSVVTAVKFTISDHPQPIDPLLKNCIGDFLKTLEDPDLNVRRVALVTFNSAAHNKPSLIRDLLDTVLPHLYNETKVRKELIREVEMGPFKHTVDDGLDIRKAAFECMYTLLDSCLDRLDIFEFLNHVEDGLKDHYDIKMLTFLMLVRLSTLCPSAVLQRLDRLVEPLRATCTTKVKANSVKQEFEKQDELKRSAMRAVAALLTIPEAEKSPLMSEFQSQISSNPELAAIFESIQKDSSSTNLESMDTS</sequence>
<keyword id="KW-0002">3D-structure</keyword>
<keyword id="KW-0007">Acetylation</keyword>
<keyword id="KW-0025">Alternative splicing</keyword>
<keyword id="KW-0963">Cytoplasm</keyword>
<keyword id="KW-0903">Direct protein sequencing</keyword>
<keyword id="KW-0539">Nucleus</keyword>
<keyword id="KW-0597">Phosphoprotein</keyword>
<keyword id="KW-1267">Proteomics identification</keyword>
<keyword id="KW-1185">Reference proteome</keyword>
<keyword id="KW-0677">Repeat</keyword>
<keyword id="KW-0833">Ubl conjugation pathway</keyword>
<proteinExistence type="evidence at protein level"/>
<feature type="initiator methionine" description="Removed" evidence="18 19 25 27">
    <location>
        <position position="1"/>
    </location>
</feature>
<feature type="chain" id="PRO_0000089293" description="Cullin-associated NEDD8-dissociated protein 1">
    <location>
        <begin position="2"/>
        <end position="1230"/>
    </location>
</feature>
<feature type="repeat" description="HEAT 1">
    <location>
        <begin position="2"/>
        <end position="39"/>
    </location>
</feature>
<feature type="repeat" description="HEAT 2">
    <location>
        <begin position="44"/>
        <end position="81"/>
    </location>
</feature>
<feature type="repeat" description="HEAT 3">
    <location>
        <begin position="83"/>
        <end position="119"/>
    </location>
</feature>
<feature type="repeat" description="HEAT 4">
    <location>
        <begin position="131"/>
        <end position="165"/>
    </location>
</feature>
<feature type="repeat" description="HEAT 5">
    <location>
        <begin position="171"/>
        <end position="208"/>
    </location>
</feature>
<feature type="repeat" description="HEAT 6">
    <location>
        <begin position="210"/>
        <end position="247"/>
    </location>
</feature>
<feature type="repeat" description="HEAT 7">
    <location>
        <begin position="248"/>
        <end position="282"/>
    </location>
</feature>
<feature type="repeat" description="HEAT 8">
    <location>
        <begin position="289"/>
        <end position="366"/>
    </location>
</feature>
<feature type="repeat" description="HEAT 9">
    <location>
        <begin position="370"/>
        <end position="407"/>
    </location>
</feature>
<feature type="repeat" description="HEAT 10">
    <location>
        <begin position="424"/>
        <end position="467"/>
    </location>
</feature>
<feature type="repeat" description="HEAT 11">
    <location>
        <begin position="471"/>
        <end position="510"/>
    </location>
</feature>
<feature type="repeat" description="HEAT 12">
    <location>
        <begin position="515"/>
        <end position="552"/>
    </location>
</feature>
<feature type="repeat" description="HEAT 13">
    <location>
        <begin position="563"/>
        <end position="602"/>
    </location>
</feature>
<feature type="repeat" description="HEAT 14">
    <location>
        <begin position="606"/>
        <end position="643"/>
    </location>
</feature>
<feature type="repeat" description="HEAT 15">
    <location>
        <begin position="646"/>
        <end position="683"/>
    </location>
</feature>
<feature type="repeat" description="HEAT 16">
    <location>
        <begin position="688"/>
        <end position="725"/>
    </location>
</feature>
<feature type="repeat" description="HEAT 17">
    <location>
        <begin position="729"/>
        <end position="768"/>
    </location>
</feature>
<feature type="repeat" description="HEAT 18">
    <location>
        <begin position="770"/>
        <end position="808"/>
    </location>
</feature>
<feature type="repeat" description="HEAT 19">
    <location>
        <begin position="809"/>
        <end position="845"/>
    </location>
</feature>
<feature type="repeat" description="HEAT 20">
    <location>
        <begin position="852"/>
        <end position="889"/>
    </location>
</feature>
<feature type="repeat" description="HEAT 21">
    <location>
        <begin position="890"/>
        <end position="927"/>
    </location>
</feature>
<feature type="repeat" description="HEAT 22">
    <location>
        <begin position="928"/>
        <end position="960"/>
    </location>
</feature>
<feature type="repeat" description="HEAT 23">
    <location>
        <begin position="961"/>
        <end position="998"/>
    </location>
</feature>
<feature type="repeat" description="HEAT 24">
    <location>
        <begin position="1002"/>
        <end position="1039"/>
    </location>
</feature>
<feature type="repeat" description="HEAT 25">
    <location>
        <begin position="1043"/>
        <end position="1097"/>
    </location>
</feature>
<feature type="repeat" description="HEAT 26">
    <location>
        <begin position="1099"/>
        <end position="1133"/>
    </location>
</feature>
<feature type="repeat" description="HEAT 27">
    <location>
        <begin position="1140"/>
        <end position="1189"/>
    </location>
</feature>
<feature type="region of interest" description="Disordered" evidence="2">
    <location>
        <begin position="315"/>
        <end position="344"/>
    </location>
</feature>
<feature type="modified residue" description="N-acetylalanine" evidence="18 19 25 27">
    <location>
        <position position="2"/>
    </location>
</feature>
<feature type="modified residue" description="N6-acetyllysine" evidence="26">
    <location>
        <position position="55"/>
    </location>
</feature>
<feature type="modified residue" description="Phosphoserine" evidence="24">
    <location>
        <position position="335"/>
    </location>
</feature>
<feature type="modified residue" description="Phosphoserine" evidence="28">
    <location>
        <position position="558"/>
    </location>
</feature>
<feature type="modified residue" description="N6-acetyllysine" evidence="26">
    <location>
        <position position="971"/>
    </location>
</feature>
<feature type="splice variant" id="VSP_013947" description="In isoform 3." evidence="21">
    <location>
        <begin position="1"/>
        <end position="157"/>
    </location>
</feature>
<feature type="splice variant" id="VSP_013948" description="In isoform 2." evidence="20">
    <location>
        <begin position="458"/>
        <end position="625"/>
    </location>
</feature>
<feature type="splice variant" id="VSP_013949" description="In isoform 3." evidence="21">
    <original>VIRPLDQPSSFD</original>
    <variation>AHHMPEAQWLRL</variation>
    <location>
        <begin position="549"/>
        <end position="560"/>
    </location>
</feature>
<feature type="splice variant" id="VSP_013950" description="In isoform 3." evidence="21">
    <location>
        <begin position="561"/>
        <end position="1230"/>
    </location>
</feature>
<feature type="sequence variant" id="VAR_054041" description="In dbSNP:rs12580996.">
    <original>V</original>
    <variation>A</variation>
    <location>
        <position position="803"/>
    </location>
</feature>
<feature type="sequence variant" id="VAR_025327" description="In dbSNP:rs17854618." evidence="6">
    <original>A</original>
    <variation>V</variation>
    <location>
        <position position="952"/>
    </location>
</feature>
<feature type="sequence conflict" description="In Ref. 7; BAB55365." evidence="22" ref="7">
    <original>R</original>
    <variation>K</variation>
    <location>
        <position position="272"/>
    </location>
</feature>
<feature type="sequence conflict" description="In Ref. 7; BAB55090." evidence="22" ref="7">
    <original>M</original>
    <variation>I</variation>
    <location>
        <position position="457"/>
    </location>
</feature>
<feature type="sequence conflict" description="In Ref. 3; AAF67492." evidence="22" ref="3">
    <original>S</original>
    <variation>P</variation>
    <location>
        <position position="606"/>
    </location>
</feature>
<feature type="sequence conflict" description="In Ref. 3; AAF67492." evidence="22" ref="3">
    <original>P</original>
    <variation>S</variation>
    <location>
        <position position="609"/>
    </location>
</feature>
<feature type="sequence conflict" description="In Ref. 3; AAF67492." evidence="22" ref="3">
    <original>T</original>
    <variation>S</variation>
    <location>
        <position position="1047"/>
    </location>
</feature>
<feature type="sequence conflict" description="In Ref. 7; BAB55090." evidence="22" ref="7">
    <original>M</original>
    <variation>T</variation>
    <location>
        <position position="1177"/>
    </location>
</feature>
<feature type="helix" evidence="30">
    <location>
        <begin position="7"/>
        <end position="14"/>
    </location>
</feature>
<feature type="strand" evidence="31">
    <location>
        <begin position="17"/>
        <end position="19"/>
    </location>
</feature>
<feature type="helix" evidence="30">
    <location>
        <begin position="20"/>
        <end position="33"/>
    </location>
</feature>
<feature type="strand" evidence="29">
    <location>
        <begin position="35"/>
        <end position="37"/>
    </location>
</feature>
<feature type="helix" evidence="30">
    <location>
        <begin position="46"/>
        <end position="56"/>
    </location>
</feature>
<feature type="helix" evidence="30">
    <location>
        <begin position="62"/>
        <end position="76"/>
    </location>
</feature>
<feature type="helix" evidence="30">
    <location>
        <begin position="81"/>
        <end position="95"/>
    </location>
</feature>
<feature type="helix" evidence="30">
    <location>
        <begin position="100"/>
        <end position="116"/>
    </location>
</feature>
<feature type="helix" evidence="30">
    <location>
        <begin position="128"/>
        <end position="143"/>
    </location>
</feature>
<feature type="helix" evidence="30">
    <location>
        <begin position="148"/>
        <end position="164"/>
    </location>
</feature>
<feature type="turn" evidence="31">
    <location>
        <begin position="166"/>
        <end position="168"/>
    </location>
</feature>
<feature type="helix" evidence="31">
    <location>
        <begin position="170"/>
        <end position="172"/>
    </location>
</feature>
<feature type="helix" evidence="30">
    <location>
        <begin position="173"/>
        <end position="180"/>
    </location>
</feature>
<feature type="helix" evidence="30">
    <location>
        <begin position="181"/>
        <end position="185"/>
    </location>
</feature>
<feature type="helix" evidence="30">
    <location>
        <begin position="189"/>
        <end position="204"/>
    </location>
</feature>
<feature type="helix" evidence="30">
    <location>
        <begin position="208"/>
        <end position="224"/>
    </location>
</feature>
<feature type="helix" evidence="30">
    <location>
        <begin position="228"/>
        <end position="244"/>
    </location>
</feature>
<feature type="helix" evidence="29">
    <location>
        <begin position="247"/>
        <end position="249"/>
    </location>
</feature>
<feature type="helix" evidence="30">
    <location>
        <begin position="250"/>
        <end position="252"/>
    </location>
</feature>
<feature type="helix" evidence="30">
    <location>
        <begin position="253"/>
        <end position="263"/>
    </location>
</feature>
<feature type="helix" evidence="30">
    <location>
        <begin position="269"/>
        <end position="285"/>
    </location>
</feature>
<feature type="turn" evidence="30">
    <location>
        <begin position="287"/>
        <end position="290"/>
    </location>
</feature>
<feature type="helix" evidence="30">
    <location>
        <begin position="291"/>
        <end position="293"/>
    </location>
</feature>
<feature type="helix" evidence="30">
    <location>
        <begin position="294"/>
        <end position="305"/>
    </location>
</feature>
<feature type="helix" evidence="30">
    <location>
        <begin position="347"/>
        <end position="362"/>
    </location>
</feature>
<feature type="helix" evidence="33">
    <location>
        <begin position="365"/>
        <end position="367"/>
    </location>
</feature>
<feature type="helix" evidence="30">
    <location>
        <begin position="368"/>
        <end position="381"/>
    </location>
</feature>
<feature type="helix" evidence="30">
    <location>
        <begin position="382"/>
        <end position="384"/>
    </location>
</feature>
<feature type="helix" evidence="30">
    <location>
        <begin position="388"/>
        <end position="405"/>
    </location>
</feature>
<feature type="helix" evidence="30">
    <location>
        <begin position="424"/>
        <end position="442"/>
    </location>
</feature>
<feature type="helix" evidence="30">
    <location>
        <begin position="448"/>
        <end position="464"/>
    </location>
</feature>
<feature type="turn" evidence="30">
    <location>
        <begin position="466"/>
        <end position="469"/>
    </location>
</feature>
<feature type="strand" evidence="35">
    <location>
        <begin position="470"/>
        <end position="472"/>
    </location>
</feature>
<feature type="helix" evidence="30">
    <location>
        <begin position="473"/>
        <end position="484"/>
    </location>
</feature>
<feature type="strand" evidence="29">
    <location>
        <begin position="487"/>
        <end position="489"/>
    </location>
</feature>
<feature type="helix" evidence="30">
    <location>
        <begin position="491"/>
        <end position="506"/>
    </location>
</feature>
<feature type="helix" evidence="30">
    <location>
        <begin position="510"/>
        <end position="516"/>
    </location>
</feature>
<feature type="helix" evidence="30">
    <location>
        <begin position="517"/>
        <end position="528"/>
    </location>
</feature>
<feature type="helix" evidence="30">
    <location>
        <begin position="533"/>
        <end position="550"/>
    </location>
</feature>
<feature type="strand" evidence="30">
    <location>
        <begin position="553"/>
        <end position="555"/>
    </location>
</feature>
<feature type="helix" evidence="30">
    <location>
        <begin position="562"/>
        <end position="576"/>
    </location>
</feature>
<feature type="strand" evidence="30">
    <location>
        <begin position="579"/>
        <end position="581"/>
    </location>
</feature>
<feature type="helix" evidence="30">
    <location>
        <begin position="583"/>
        <end position="600"/>
    </location>
</feature>
<feature type="turn" evidence="35">
    <location>
        <begin position="601"/>
        <end position="603"/>
    </location>
</feature>
<feature type="helix" evidence="30">
    <location>
        <begin position="607"/>
        <end position="618"/>
    </location>
</feature>
<feature type="strand" evidence="29">
    <location>
        <begin position="621"/>
        <end position="623"/>
    </location>
</feature>
<feature type="helix" evidence="30">
    <location>
        <begin position="625"/>
        <end position="636"/>
    </location>
</feature>
<feature type="strand" evidence="35">
    <location>
        <begin position="637"/>
        <end position="640"/>
    </location>
</feature>
<feature type="helix" evidence="30">
    <location>
        <begin position="645"/>
        <end position="657"/>
    </location>
</feature>
<feature type="helix" evidence="30">
    <location>
        <begin position="658"/>
        <end position="660"/>
    </location>
</feature>
<feature type="helix" evidence="30">
    <location>
        <begin position="664"/>
        <end position="680"/>
    </location>
</feature>
<feature type="helix" evidence="30">
    <location>
        <begin position="682"/>
        <end position="684"/>
    </location>
</feature>
<feature type="helix" evidence="30">
    <location>
        <begin position="687"/>
        <end position="694"/>
    </location>
</feature>
<feature type="turn" evidence="30">
    <location>
        <begin position="698"/>
        <end position="700"/>
    </location>
</feature>
<feature type="strand" evidence="30">
    <location>
        <begin position="701"/>
        <end position="704"/>
    </location>
</feature>
<feature type="helix" evidence="30">
    <location>
        <begin position="706"/>
        <end position="722"/>
    </location>
</feature>
<feature type="helix" evidence="30">
    <location>
        <begin position="724"/>
        <end position="729"/>
    </location>
</feature>
<feature type="helix" evidence="30">
    <location>
        <begin position="733"/>
        <end position="742"/>
    </location>
</feature>
<feature type="helix" evidence="30">
    <location>
        <begin position="750"/>
        <end position="765"/>
    </location>
</feature>
<feature type="helix" evidence="30">
    <location>
        <begin position="772"/>
        <end position="785"/>
    </location>
</feature>
<feature type="helix" evidence="30">
    <location>
        <begin position="793"/>
        <end position="809"/>
    </location>
</feature>
<feature type="helix" evidence="30">
    <location>
        <begin position="811"/>
        <end position="813"/>
    </location>
</feature>
<feature type="helix" evidence="30">
    <location>
        <begin position="814"/>
        <end position="826"/>
    </location>
</feature>
<feature type="strand" evidence="30">
    <location>
        <begin position="828"/>
        <end position="830"/>
    </location>
</feature>
<feature type="helix" evidence="30">
    <location>
        <begin position="832"/>
        <end position="848"/>
    </location>
</feature>
<feature type="strand" evidence="34">
    <location>
        <begin position="853"/>
        <end position="856"/>
    </location>
</feature>
<feature type="helix" evidence="30">
    <location>
        <begin position="857"/>
        <end position="865"/>
    </location>
</feature>
<feature type="helix" evidence="30">
    <location>
        <begin position="870"/>
        <end position="886"/>
    </location>
</feature>
<feature type="helix" evidence="30">
    <location>
        <begin position="888"/>
        <end position="901"/>
    </location>
</feature>
<feature type="strand" evidence="30">
    <location>
        <begin position="903"/>
        <end position="905"/>
    </location>
</feature>
<feature type="helix" evidence="30">
    <location>
        <begin position="909"/>
        <end position="918"/>
    </location>
</feature>
<feature type="helix" evidence="30">
    <location>
        <begin position="922"/>
        <end position="925"/>
    </location>
</feature>
<feature type="helix" evidence="33">
    <location>
        <begin position="926"/>
        <end position="928"/>
    </location>
</feature>
<feature type="helix" evidence="30">
    <location>
        <begin position="929"/>
        <end position="939"/>
    </location>
</feature>
<feature type="strand" evidence="33">
    <location>
        <begin position="943"/>
        <end position="946"/>
    </location>
</feature>
<feature type="helix" evidence="30">
    <location>
        <begin position="947"/>
        <end position="960"/>
    </location>
</feature>
<feature type="helix" evidence="30">
    <location>
        <begin position="963"/>
        <end position="972"/>
    </location>
</feature>
<feature type="turn" evidence="30">
    <location>
        <begin position="973"/>
        <end position="975"/>
    </location>
</feature>
<feature type="helix" evidence="30">
    <location>
        <begin position="979"/>
        <end position="989"/>
    </location>
</feature>
<feature type="helix" evidence="30">
    <location>
        <begin position="990"/>
        <end position="992"/>
    </location>
</feature>
<feature type="helix" evidence="30">
    <location>
        <begin position="1001"/>
        <end position="1012"/>
    </location>
</feature>
<feature type="helix" evidence="30">
    <location>
        <begin position="1013"/>
        <end position="1015"/>
    </location>
</feature>
<feature type="strand" evidence="35">
    <location>
        <begin position="1016"/>
        <end position="1019"/>
    </location>
</feature>
<feature type="helix" evidence="30">
    <location>
        <begin position="1020"/>
        <end position="1036"/>
    </location>
</feature>
<feature type="helix" evidence="30">
    <location>
        <begin position="1038"/>
        <end position="1040"/>
    </location>
</feature>
<feature type="helix" evidence="30">
    <location>
        <begin position="1042"/>
        <end position="1044"/>
    </location>
</feature>
<feature type="helix" evidence="30">
    <location>
        <begin position="1045"/>
        <end position="1054"/>
    </location>
</feature>
<feature type="helix" evidence="31">
    <location>
        <begin position="1060"/>
        <end position="1062"/>
    </location>
</feature>
<feature type="strand" evidence="30">
    <location>
        <begin position="1064"/>
        <end position="1068"/>
    </location>
</feature>
<feature type="strand" evidence="30">
    <location>
        <begin position="1071"/>
        <end position="1075"/>
    </location>
</feature>
<feature type="helix" evidence="30">
    <location>
        <begin position="1079"/>
        <end position="1095"/>
    </location>
</feature>
<feature type="strand" evidence="35">
    <location>
        <begin position="1098"/>
        <end position="1100"/>
    </location>
</feature>
<feature type="helix" evidence="30">
    <location>
        <begin position="1104"/>
        <end position="1112"/>
    </location>
</feature>
<feature type="helix" evidence="30">
    <location>
        <begin position="1117"/>
        <end position="1130"/>
    </location>
</feature>
<feature type="helix" evidence="30">
    <location>
        <begin position="1135"/>
        <end position="1140"/>
    </location>
</feature>
<feature type="helix" evidence="30">
    <location>
        <begin position="1142"/>
        <end position="1153"/>
    </location>
</feature>
<feature type="strand" evidence="30">
    <location>
        <begin position="1159"/>
        <end position="1161"/>
    </location>
</feature>
<feature type="helix" evidence="30">
    <location>
        <begin position="1163"/>
        <end position="1184"/>
    </location>
</feature>
<feature type="strand" evidence="32">
    <location>
        <begin position="1186"/>
        <end position="1188"/>
    </location>
</feature>
<feature type="helix" evidence="30">
    <location>
        <begin position="1193"/>
        <end position="1204"/>
    </location>
</feature>
<feature type="helix" evidence="30">
    <location>
        <begin position="1206"/>
        <end position="1214"/>
    </location>
</feature>
<accession>Q86VP6</accession>
<accession>B2RAU3</accession>
<accession>O94918</accession>
<accession>Q6PIY4</accession>
<accession>Q8NDJ4</accession>
<accession>Q96JZ9</accession>
<accession>Q96T19</accession>
<accession>Q9BTC4</accession>
<accession>Q9H0G2</accession>
<accession>Q9P0H7</accession>
<accession>Q9UF85</accession>